<organism>
    <name type="scientific">Drosophila melanogaster</name>
    <name type="common">Fruit fly</name>
    <dbReference type="NCBI Taxonomy" id="7227"/>
    <lineage>
        <taxon>Eukaryota</taxon>
        <taxon>Metazoa</taxon>
        <taxon>Ecdysozoa</taxon>
        <taxon>Arthropoda</taxon>
        <taxon>Hexapoda</taxon>
        <taxon>Insecta</taxon>
        <taxon>Pterygota</taxon>
        <taxon>Neoptera</taxon>
        <taxon>Endopterygota</taxon>
        <taxon>Diptera</taxon>
        <taxon>Brachycera</taxon>
        <taxon>Muscomorpha</taxon>
        <taxon>Ephydroidea</taxon>
        <taxon>Drosophilidae</taxon>
        <taxon>Drosophila</taxon>
        <taxon>Sophophora</taxon>
    </lineage>
</organism>
<keyword id="KW-0106">Calcium</keyword>
<keyword id="KW-0963">Cytoplasm</keyword>
<keyword id="KW-0449">Lipoprotein</keyword>
<keyword id="KW-0479">Metal-binding</keyword>
<keyword id="KW-0519">Myristate</keyword>
<keyword id="KW-1185">Reference proteome</keyword>
<keyword id="KW-0677">Repeat</keyword>
<keyword id="KW-0691">RNA editing</keyword>
<accession>P37236</accession>
<accession>A4V4Q8</accession>
<name>FRQ1_DROME</name>
<reference key="1">
    <citation type="journal article" date="1993" name="Neuron">
        <title>Frequenin -- a novel calcium-binding protein that modulates synaptic efficacy in the Drosophila nervous system.</title>
        <authorList>
            <person name="Pongs O."/>
            <person name="Lindemeier J."/>
            <person name="Zhu X.R."/>
            <person name="Theil T."/>
            <person name="Engelkamp D."/>
            <person name="Krah-Jentgens I."/>
            <person name="Lambrecht H.-G."/>
            <person name="Koch K.W."/>
            <person name="Schwemer G."/>
            <person name="Rivosecchi R."/>
            <person name="Mallart A."/>
            <person name="Calceran J."/>
            <person name="Canal I."/>
            <person name="Barbas J.A."/>
            <person name="Ferrus A."/>
        </authorList>
    </citation>
    <scope>NUCLEOTIDE SEQUENCE [GENOMIC DNA]</scope>
    <scope>FUNCTION</scope>
    <scope>TISSUE SPECIFICITY</scope>
    <scope>DEVELOPMENTAL STAGE</scope>
    <source>
        <strain>Canton-S</strain>
        <strain>Oregon-R</strain>
        <tissue>Embryo</tissue>
    </source>
</reference>
<reference key="2">
    <citation type="journal article" date="2000" name="Science">
        <title>The genome sequence of Drosophila melanogaster.</title>
        <authorList>
            <person name="Adams M.D."/>
            <person name="Celniker S.E."/>
            <person name="Holt R.A."/>
            <person name="Evans C.A."/>
            <person name="Gocayne J.D."/>
            <person name="Amanatides P.G."/>
            <person name="Scherer S.E."/>
            <person name="Li P.W."/>
            <person name="Hoskins R.A."/>
            <person name="Galle R.F."/>
            <person name="George R.A."/>
            <person name="Lewis S.E."/>
            <person name="Richards S."/>
            <person name="Ashburner M."/>
            <person name="Henderson S.N."/>
            <person name="Sutton G.G."/>
            <person name="Wortman J.R."/>
            <person name="Yandell M.D."/>
            <person name="Zhang Q."/>
            <person name="Chen L.X."/>
            <person name="Brandon R.C."/>
            <person name="Rogers Y.-H.C."/>
            <person name="Blazej R.G."/>
            <person name="Champe M."/>
            <person name="Pfeiffer B.D."/>
            <person name="Wan K.H."/>
            <person name="Doyle C."/>
            <person name="Baxter E.G."/>
            <person name="Helt G."/>
            <person name="Nelson C.R."/>
            <person name="Miklos G.L.G."/>
            <person name="Abril J.F."/>
            <person name="Agbayani A."/>
            <person name="An H.-J."/>
            <person name="Andrews-Pfannkoch C."/>
            <person name="Baldwin D."/>
            <person name="Ballew R.M."/>
            <person name="Basu A."/>
            <person name="Baxendale J."/>
            <person name="Bayraktaroglu L."/>
            <person name="Beasley E.M."/>
            <person name="Beeson K.Y."/>
            <person name="Benos P.V."/>
            <person name="Berman B.P."/>
            <person name="Bhandari D."/>
            <person name="Bolshakov S."/>
            <person name="Borkova D."/>
            <person name="Botchan M.R."/>
            <person name="Bouck J."/>
            <person name="Brokstein P."/>
            <person name="Brottier P."/>
            <person name="Burtis K.C."/>
            <person name="Busam D.A."/>
            <person name="Butler H."/>
            <person name="Cadieu E."/>
            <person name="Center A."/>
            <person name="Chandra I."/>
            <person name="Cherry J.M."/>
            <person name="Cawley S."/>
            <person name="Dahlke C."/>
            <person name="Davenport L.B."/>
            <person name="Davies P."/>
            <person name="de Pablos B."/>
            <person name="Delcher A."/>
            <person name="Deng Z."/>
            <person name="Mays A.D."/>
            <person name="Dew I."/>
            <person name="Dietz S.M."/>
            <person name="Dodson K."/>
            <person name="Doup L.E."/>
            <person name="Downes M."/>
            <person name="Dugan-Rocha S."/>
            <person name="Dunkov B.C."/>
            <person name="Dunn P."/>
            <person name="Durbin K.J."/>
            <person name="Evangelista C.C."/>
            <person name="Ferraz C."/>
            <person name="Ferriera S."/>
            <person name="Fleischmann W."/>
            <person name="Fosler C."/>
            <person name="Gabrielian A.E."/>
            <person name="Garg N.S."/>
            <person name="Gelbart W.M."/>
            <person name="Glasser K."/>
            <person name="Glodek A."/>
            <person name="Gong F."/>
            <person name="Gorrell J.H."/>
            <person name="Gu Z."/>
            <person name="Guan P."/>
            <person name="Harris M."/>
            <person name="Harris N.L."/>
            <person name="Harvey D.A."/>
            <person name="Heiman T.J."/>
            <person name="Hernandez J.R."/>
            <person name="Houck J."/>
            <person name="Hostin D."/>
            <person name="Houston K.A."/>
            <person name="Howland T.J."/>
            <person name="Wei M.-H."/>
            <person name="Ibegwam C."/>
            <person name="Jalali M."/>
            <person name="Kalush F."/>
            <person name="Karpen G.H."/>
            <person name="Ke Z."/>
            <person name="Kennison J.A."/>
            <person name="Ketchum K.A."/>
            <person name="Kimmel B.E."/>
            <person name="Kodira C.D."/>
            <person name="Kraft C.L."/>
            <person name="Kravitz S."/>
            <person name="Kulp D."/>
            <person name="Lai Z."/>
            <person name="Lasko P."/>
            <person name="Lei Y."/>
            <person name="Levitsky A.A."/>
            <person name="Li J.H."/>
            <person name="Li Z."/>
            <person name="Liang Y."/>
            <person name="Lin X."/>
            <person name="Liu X."/>
            <person name="Mattei B."/>
            <person name="McIntosh T.C."/>
            <person name="McLeod M.P."/>
            <person name="McPherson D."/>
            <person name="Merkulov G."/>
            <person name="Milshina N.V."/>
            <person name="Mobarry C."/>
            <person name="Morris J."/>
            <person name="Moshrefi A."/>
            <person name="Mount S.M."/>
            <person name="Moy M."/>
            <person name="Murphy B."/>
            <person name="Murphy L."/>
            <person name="Muzny D.M."/>
            <person name="Nelson D.L."/>
            <person name="Nelson D.R."/>
            <person name="Nelson K.A."/>
            <person name="Nixon K."/>
            <person name="Nusskern D.R."/>
            <person name="Pacleb J.M."/>
            <person name="Palazzolo M."/>
            <person name="Pittman G.S."/>
            <person name="Pan S."/>
            <person name="Pollard J."/>
            <person name="Puri V."/>
            <person name="Reese M.G."/>
            <person name="Reinert K."/>
            <person name="Remington K."/>
            <person name="Saunders R.D.C."/>
            <person name="Scheeler F."/>
            <person name="Shen H."/>
            <person name="Shue B.C."/>
            <person name="Siden-Kiamos I."/>
            <person name="Simpson M."/>
            <person name="Skupski M.P."/>
            <person name="Smith T.J."/>
            <person name="Spier E."/>
            <person name="Spradling A.C."/>
            <person name="Stapleton M."/>
            <person name="Strong R."/>
            <person name="Sun E."/>
            <person name="Svirskas R."/>
            <person name="Tector C."/>
            <person name="Turner R."/>
            <person name="Venter E."/>
            <person name="Wang A.H."/>
            <person name="Wang X."/>
            <person name="Wang Z.-Y."/>
            <person name="Wassarman D.A."/>
            <person name="Weinstock G.M."/>
            <person name="Weissenbach J."/>
            <person name="Williams S.M."/>
            <person name="Woodage T."/>
            <person name="Worley K.C."/>
            <person name="Wu D."/>
            <person name="Yang S."/>
            <person name="Yao Q.A."/>
            <person name="Ye J."/>
            <person name="Yeh R.-F."/>
            <person name="Zaveri J.S."/>
            <person name="Zhan M."/>
            <person name="Zhang G."/>
            <person name="Zhao Q."/>
            <person name="Zheng L."/>
            <person name="Zheng X.H."/>
            <person name="Zhong F.N."/>
            <person name="Zhong W."/>
            <person name="Zhou X."/>
            <person name="Zhu S.C."/>
            <person name="Zhu X."/>
            <person name="Smith H.O."/>
            <person name="Gibbs R.A."/>
            <person name="Myers E.W."/>
            <person name="Rubin G.M."/>
            <person name="Venter J.C."/>
        </authorList>
    </citation>
    <scope>NUCLEOTIDE SEQUENCE [LARGE SCALE GENOMIC DNA]</scope>
    <source>
        <strain>Berkeley</strain>
    </source>
</reference>
<reference key="3">
    <citation type="journal article" date="2002" name="Genome Biol.">
        <title>Annotation of the Drosophila melanogaster euchromatic genome: a systematic review.</title>
        <authorList>
            <person name="Misra S."/>
            <person name="Crosby M.A."/>
            <person name="Mungall C.J."/>
            <person name="Matthews B.B."/>
            <person name="Campbell K.S."/>
            <person name="Hradecky P."/>
            <person name="Huang Y."/>
            <person name="Kaminker J.S."/>
            <person name="Millburn G.H."/>
            <person name="Prochnik S.E."/>
            <person name="Smith C.D."/>
            <person name="Tupy J.L."/>
            <person name="Whitfield E.J."/>
            <person name="Bayraktaroglu L."/>
            <person name="Berman B.P."/>
            <person name="Bettencourt B.R."/>
            <person name="Celniker S.E."/>
            <person name="de Grey A.D.N.J."/>
            <person name="Drysdale R.A."/>
            <person name="Harris N.L."/>
            <person name="Richter J."/>
            <person name="Russo S."/>
            <person name="Schroeder A.J."/>
            <person name="Shu S.Q."/>
            <person name="Stapleton M."/>
            <person name="Yamada C."/>
            <person name="Ashburner M."/>
            <person name="Gelbart W.M."/>
            <person name="Rubin G.M."/>
            <person name="Lewis S.E."/>
        </authorList>
    </citation>
    <scope>GENOME REANNOTATION</scope>
    <source>
        <strain>Berkeley</strain>
    </source>
</reference>
<reference key="4">
    <citation type="journal article" date="2007" name="Eur. J. Neurosci.">
        <title>Chronic and acute alterations in the functional levels of Frequenins 1 and 2 reveal their roles in synaptic transmission and axon terminal morphology.</title>
        <authorList>
            <person name="Romero-Pozuelo J."/>
            <person name="Dason J.S."/>
            <person name="Atwood H.L."/>
            <person name="Ferrus A."/>
        </authorList>
    </citation>
    <scope>FUNCTION</scope>
    <scope>TISSUE SPECIFICITY</scope>
    <scope>DEVELOPMENTAL STAGE</scope>
    <scope>DISRUPTION PHENOTYPE</scope>
</reference>
<reference key="5">
    <citation type="journal article" date="2014" name="J. Cell Sci.">
        <title>The guanine-exchange factor Ric8a binds to the Ca sensor NCS-1 to regulate synapse number and neurotransmitter release.</title>
        <authorList>
            <person name="Romero-Pozuelo J."/>
            <person name="Dason J.S."/>
            <person name="Mansilla A."/>
            <person name="Banos-Mateos S."/>
            <person name="Sardina J.L."/>
            <person name="Chaves-Sanjuan A."/>
            <person name="Jurado-Gomez J."/>
            <person name="Santana E."/>
            <person name="Atwood H.L."/>
            <person name="Hernandez-Hernandez A."/>
            <person name="Sanchez-Barrena M.J."/>
            <person name="Ferrus A."/>
        </authorList>
    </citation>
    <scope>LACK OF INTERACTION WITH RIC8A</scope>
    <scope>RNA EDITING</scope>
    <scope>MUTAGENESIS OF LYS-94; SER-138 AND GLY-161</scope>
</reference>
<comment type="function">
    <text evidence="4 6">Ca(2+)-dependent modulation of synaptic efficacy (PubMed:17970740, PubMed:8101711). Also plays a role in axon terminal morphology (PubMed:17970740).</text>
</comment>
<comment type="subunit">
    <text evidence="5">In contrast to Frq2, does not interact with ric8a.</text>
</comment>
<comment type="subcellular location">
    <subcellularLocation>
        <location evidence="2">Cytoplasm</location>
    </subcellularLocation>
</comment>
<comment type="tissue specificity">
    <text evidence="4 6">Enriched in synapses, such as the motor nerve endings at neuromuscular junctions (PubMed:8101711). In the embryo, highly expressed in the ventral ganglia (PubMed:17970740).</text>
</comment>
<comment type="developmental stage">
    <text evidence="4 6">Detected in embryo, larva and adult (PubMed:17970740, PubMed:8101711). Two- to three-fold more abundant at the end of the embryo stage and in first instar larva than in the adult (PubMed:17970740).</text>
</comment>
<comment type="RNA editing">
    <location>
        <position position="178" evidence="5"/>
    </location>
    <text evidence="5">Partially edited.</text>
</comment>
<comment type="disruption phenotype">
    <text evidence="4">Increased number of type Is boutons in neuromuscular junctions of abdominal segment 3 muscle fibers and reduced nerve-evoked excitatory junction potential.</text>
</comment>
<comment type="miscellaneous">
    <text evidence="2">Binds 3 calcium ions via the second, third and fourth EF-hands.</text>
</comment>
<comment type="similarity">
    <text evidence="7">Belongs to the recoverin family.</text>
</comment>
<evidence type="ECO:0000250" key="1">
    <source>
        <dbReference type="UniProtKB" id="P62168"/>
    </source>
</evidence>
<evidence type="ECO:0000250" key="2">
    <source>
        <dbReference type="UniProtKB" id="Q9VWX8"/>
    </source>
</evidence>
<evidence type="ECO:0000255" key="3">
    <source>
        <dbReference type="PROSITE-ProRule" id="PRU00448"/>
    </source>
</evidence>
<evidence type="ECO:0000269" key="4">
    <source>
    </source>
</evidence>
<evidence type="ECO:0000269" key="5">
    <source>
    </source>
</evidence>
<evidence type="ECO:0000269" key="6">
    <source>
    </source>
</evidence>
<evidence type="ECO:0000305" key="7"/>
<feature type="initiator methionine" description="Removed" evidence="1">
    <location>
        <position position="1"/>
    </location>
</feature>
<feature type="chain" id="PRO_0000073800" description="Frequenin-1">
    <location>
        <begin position="2"/>
        <end position="187"/>
    </location>
</feature>
<feature type="domain" description="EF-hand 1" evidence="7">
    <location>
        <begin position="24"/>
        <end position="59"/>
    </location>
</feature>
<feature type="domain" description="EF-hand 2" evidence="3">
    <location>
        <begin position="60"/>
        <end position="95"/>
    </location>
</feature>
<feature type="domain" description="EF-hand 3" evidence="3">
    <location>
        <begin position="96"/>
        <end position="131"/>
    </location>
</feature>
<feature type="domain" description="EF-hand 4" evidence="3">
    <location>
        <begin position="143"/>
        <end position="178"/>
    </location>
</feature>
<feature type="binding site" evidence="3">
    <location>
        <position position="73"/>
    </location>
    <ligand>
        <name>Ca(2+)</name>
        <dbReference type="ChEBI" id="CHEBI:29108"/>
        <label>1</label>
    </ligand>
</feature>
<feature type="binding site" evidence="3">
    <location>
        <position position="75"/>
    </location>
    <ligand>
        <name>Ca(2+)</name>
        <dbReference type="ChEBI" id="CHEBI:29108"/>
        <label>1</label>
    </ligand>
</feature>
<feature type="binding site" evidence="3">
    <location>
        <position position="77"/>
    </location>
    <ligand>
        <name>Ca(2+)</name>
        <dbReference type="ChEBI" id="CHEBI:29108"/>
        <label>1</label>
    </ligand>
</feature>
<feature type="binding site" evidence="3">
    <location>
        <position position="79"/>
    </location>
    <ligand>
        <name>Ca(2+)</name>
        <dbReference type="ChEBI" id="CHEBI:29108"/>
        <label>1</label>
    </ligand>
</feature>
<feature type="binding site" evidence="3">
    <location>
        <position position="84"/>
    </location>
    <ligand>
        <name>Ca(2+)</name>
        <dbReference type="ChEBI" id="CHEBI:29108"/>
        <label>1</label>
    </ligand>
</feature>
<feature type="binding site" evidence="3">
    <location>
        <position position="109"/>
    </location>
    <ligand>
        <name>Ca(2+)</name>
        <dbReference type="ChEBI" id="CHEBI:29108"/>
        <label>2</label>
    </ligand>
</feature>
<feature type="binding site" evidence="3">
    <location>
        <position position="111"/>
    </location>
    <ligand>
        <name>Ca(2+)</name>
        <dbReference type="ChEBI" id="CHEBI:29108"/>
        <label>2</label>
    </ligand>
</feature>
<feature type="binding site" evidence="3">
    <location>
        <position position="113"/>
    </location>
    <ligand>
        <name>Ca(2+)</name>
        <dbReference type="ChEBI" id="CHEBI:29108"/>
        <label>2</label>
    </ligand>
</feature>
<feature type="binding site" evidence="3">
    <location>
        <position position="115"/>
    </location>
    <ligand>
        <name>Ca(2+)</name>
        <dbReference type="ChEBI" id="CHEBI:29108"/>
        <label>2</label>
    </ligand>
</feature>
<feature type="binding site" evidence="3">
    <location>
        <position position="120"/>
    </location>
    <ligand>
        <name>Ca(2+)</name>
        <dbReference type="ChEBI" id="CHEBI:29108"/>
        <label>2</label>
    </ligand>
</feature>
<feature type="binding site" evidence="3">
    <location>
        <position position="156"/>
    </location>
    <ligand>
        <name>Ca(2+)</name>
        <dbReference type="ChEBI" id="CHEBI:29108"/>
        <label>3</label>
    </ligand>
</feature>
<feature type="binding site" evidence="3">
    <location>
        <position position="158"/>
    </location>
    <ligand>
        <name>Ca(2+)</name>
        <dbReference type="ChEBI" id="CHEBI:29108"/>
        <label>3</label>
    </ligand>
</feature>
<feature type="binding site" evidence="3">
    <location>
        <position position="160"/>
    </location>
    <ligand>
        <name>Ca(2+)</name>
        <dbReference type="ChEBI" id="CHEBI:29108"/>
        <label>3</label>
    </ligand>
</feature>
<feature type="binding site" evidence="3">
    <location>
        <position position="162"/>
    </location>
    <ligand>
        <name>Ca(2+)</name>
        <dbReference type="ChEBI" id="CHEBI:29108"/>
        <label>3</label>
    </ligand>
</feature>
<feature type="binding site" evidence="3">
    <location>
        <position position="167"/>
    </location>
    <ligand>
        <name>Ca(2+)</name>
        <dbReference type="ChEBI" id="CHEBI:29108"/>
        <label>3</label>
    </ligand>
</feature>
<feature type="lipid moiety-binding region" description="N-myristoyl glycine" evidence="1">
    <location>
        <position position="2"/>
    </location>
</feature>
<feature type="sequence variant" description="In RNA edited version." evidence="5">
    <original>I</original>
    <variation>M</variation>
    <location>
        <position position="178"/>
    </location>
</feature>
<feature type="mutagenesis site" description="Gain of interaction with ric8a which is as effective as interaction of Frq2 with ric8a." evidence="5">
    <original>K</original>
    <variation>R</variation>
    <location>
        <position position="94"/>
    </location>
</feature>
<feature type="mutagenesis site" description="Gain of interaction with ric8a which is as effective as interaction of Frq2 with ric8a." evidence="5">
    <original>S</original>
    <variation>T</variation>
    <location>
        <position position="138"/>
    </location>
</feature>
<feature type="mutagenesis site" description="Gain of interaction with ric8a which is less effective than interaction of Frq2 with ric8a." evidence="5">
    <original>G</original>
    <variation>D</variation>
    <location>
        <position position="161"/>
    </location>
</feature>
<sequence length="187" mass="21668">MGKKSSKLKQDTIDRLTTDTYFTEKEIRQWHKGFLKDCPNGLLTEQGFIKIYKQFFPQGDPSKFASLVFRVFDENNDGSIEFEEFIRALSVTSKGNLDEKLQWAFRLYDVDNDGYITREEMYNIVDAIYQMVGQQPQSEDENTPQKRVDKIFDQMDKNHDGKLTLEEFREGSKADPRIVQALSLGGG</sequence>
<protein>
    <recommendedName>
        <fullName>Frequenin-1</fullName>
    </recommendedName>
    <alternativeName>
        <fullName>d-FRQ</fullName>
    </alternativeName>
</protein>
<dbReference type="EMBL" id="L08064">
    <property type="protein sequence ID" value="AAA28539.1"/>
    <property type="molecule type" value="Genomic_DNA"/>
</dbReference>
<dbReference type="EMBL" id="AE014298">
    <property type="protein sequence ID" value="AAG22356.1"/>
    <property type="molecule type" value="Genomic_DNA"/>
</dbReference>
<dbReference type="EMBL" id="AE014298">
    <property type="protein sequence ID" value="ABC67191.1"/>
    <property type="molecule type" value="Genomic_DNA"/>
</dbReference>
<dbReference type="RefSeq" id="NP_001033853.1">
    <property type="nucleotide sequence ID" value="NM_001038764.2"/>
</dbReference>
<dbReference type="RefSeq" id="NP_001259673.1">
    <property type="nucleotide sequence ID" value="NM_001272744.1"/>
</dbReference>
<dbReference type="RefSeq" id="NP_001259674.1">
    <property type="nucleotide sequence ID" value="NM_001272745.1"/>
</dbReference>
<dbReference type="RefSeq" id="NP_573271.1">
    <property type="nucleotide sequence ID" value="NM_133043.3"/>
</dbReference>
<dbReference type="SMR" id="P37236"/>
<dbReference type="BioGRID" id="59117">
    <property type="interactions" value="3"/>
</dbReference>
<dbReference type="DIP" id="DIP-23066N"/>
<dbReference type="FunCoup" id="P37236">
    <property type="interactions" value="12"/>
</dbReference>
<dbReference type="IntAct" id="P37236">
    <property type="interactions" value="3"/>
</dbReference>
<dbReference type="STRING" id="7227.FBpp0099625"/>
<dbReference type="PaxDb" id="7227-FBpp0074319"/>
<dbReference type="EnsemblMetazoa" id="FBtr0074545">
    <property type="protein sequence ID" value="FBpp0074319"/>
    <property type="gene ID" value="FBgn0030897"/>
</dbReference>
<dbReference type="EnsemblMetazoa" id="FBtr0100239">
    <property type="protein sequence ID" value="FBpp0099625"/>
    <property type="gene ID" value="FBgn0030897"/>
</dbReference>
<dbReference type="EnsemblMetazoa" id="FBtr0335119">
    <property type="protein sequence ID" value="FBpp0307120"/>
    <property type="gene ID" value="FBgn0030897"/>
</dbReference>
<dbReference type="EnsemblMetazoa" id="FBtr0335120">
    <property type="protein sequence ID" value="FBpp0307121"/>
    <property type="gene ID" value="FBgn0030897"/>
</dbReference>
<dbReference type="GeneID" id="32797"/>
<dbReference type="KEGG" id="dme:Dmel_CG5744"/>
<dbReference type="UCSC" id="CG5744-RC">
    <property type="organism name" value="d. melanogaster"/>
</dbReference>
<dbReference type="AGR" id="FB:FBgn0030897"/>
<dbReference type="CTD" id="32797"/>
<dbReference type="FlyBase" id="FBgn0030897">
    <property type="gene designation" value="Frq1"/>
</dbReference>
<dbReference type="VEuPathDB" id="VectorBase:FBgn0030897"/>
<dbReference type="eggNOG" id="KOG0044">
    <property type="taxonomic scope" value="Eukaryota"/>
</dbReference>
<dbReference type="GeneTree" id="ENSGT00940000163010"/>
<dbReference type="HOGENOM" id="CLU_072366_1_0_1"/>
<dbReference type="InParanoid" id="P37236"/>
<dbReference type="OMA" id="CAFTEKE"/>
<dbReference type="OrthoDB" id="191686at2759"/>
<dbReference type="PhylomeDB" id="P37236"/>
<dbReference type="BioGRID-ORCS" id="32797">
    <property type="hits" value="0 hits in 1 CRISPR screen"/>
</dbReference>
<dbReference type="GenomeRNAi" id="32797"/>
<dbReference type="PRO" id="PR:P37236"/>
<dbReference type="Proteomes" id="UP000000803">
    <property type="component" value="Chromosome X"/>
</dbReference>
<dbReference type="Bgee" id="FBgn0030897">
    <property type="expression patterns" value="Expressed in lamina wide-field cell (Drosophila) in brain and 189 other cell types or tissues"/>
</dbReference>
<dbReference type="ExpressionAtlas" id="P37236">
    <property type="expression patterns" value="baseline and differential"/>
</dbReference>
<dbReference type="GO" id="GO:0005737">
    <property type="term" value="C:cytoplasm"/>
    <property type="evidence" value="ECO:0007669"/>
    <property type="project" value="UniProtKB-SubCell"/>
</dbReference>
<dbReference type="GO" id="GO:0098793">
    <property type="term" value="C:presynapse"/>
    <property type="evidence" value="ECO:0007669"/>
    <property type="project" value="GOC"/>
</dbReference>
<dbReference type="GO" id="GO:0005509">
    <property type="term" value="F:calcium ion binding"/>
    <property type="evidence" value="ECO:0000314"/>
    <property type="project" value="FlyBase"/>
</dbReference>
<dbReference type="GO" id="GO:0008048">
    <property type="term" value="F:calcium sensitive guanylate cyclase activator activity"/>
    <property type="evidence" value="ECO:0000314"/>
    <property type="project" value="FlyBase"/>
</dbReference>
<dbReference type="GO" id="GO:0007268">
    <property type="term" value="P:chemical synaptic transmission"/>
    <property type="evidence" value="ECO:0000315"/>
    <property type="project" value="FlyBase"/>
</dbReference>
<dbReference type="GO" id="GO:0007528">
    <property type="term" value="P:neuromuscular junction development"/>
    <property type="evidence" value="ECO:0000315"/>
    <property type="project" value="FlyBase"/>
</dbReference>
<dbReference type="GO" id="GO:0007269">
    <property type="term" value="P:neurotransmitter secretion"/>
    <property type="evidence" value="ECO:0000315"/>
    <property type="project" value="FlyBase"/>
</dbReference>
<dbReference type="GO" id="GO:0046928">
    <property type="term" value="P:regulation of neurotransmitter secretion"/>
    <property type="evidence" value="ECO:0000250"/>
    <property type="project" value="FlyBase"/>
</dbReference>
<dbReference type="GO" id="GO:0009966">
    <property type="term" value="P:regulation of signal transduction"/>
    <property type="evidence" value="ECO:0000318"/>
    <property type="project" value="GO_Central"/>
</dbReference>
<dbReference type="CDD" id="cd00051">
    <property type="entry name" value="EFh"/>
    <property type="match status" value="2"/>
</dbReference>
<dbReference type="FunFam" id="1.10.238.10:FF:000078">
    <property type="entry name" value="Hippocalcin-like 1"/>
    <property type="match status" value="1"/>
</dbReference>
<dbReference type="FunFam" id="1.10.238.10:FF:000072">
    <property type="entry name" value="Hippocalcin-like protein 1"/>
    <property type="match status" value="1"/>
</dbReference>
<dbReference type="Gene3D" id="1.10.238.10">
    <property type="entry name" value="EF-hand"/>
    <property type="match status" value="1"/>
</dbReference>
<dbReference type="InterPro" id="IPR011992">
    <property type="entry name" value="EF-hand-dom_pair"/>
</dbReference>
<dbReference type="InterPro" id="IPR018247">
    <property type="entry name" value="EF_Hand_1_Ca_BS"/>
</dbReference>
<dbReference type="InterPro" id="IPR002048">
    <property type="entry name" value="EF_hand_dom"/>
</dbReference>
<dbReference type="InterPro" id="IPR028846">
    <property type="entry name" value="Recoverin"/>
</dbReference>
<dbReference type="PANTHER" id="PTHR23055">
    <property type="entry name" value="CALCIUM BINDING PROTEINS"/>
    <property type="match status" value="1"/>
</dbReference>
<dbReference type="PANTHER" id="PTHR23055:SF198">
    <property type="entry name" value="NEURONAL CALCIUM SENSOR 1"/>
    <property type="match status" value="1"/>
</dbReference>
<dbReference type="Pfam" id="PF00036">
    <property type="entry name" value="EF-hand_1"/>
    <property type="match status" value="1"/>
</dbReference>
<dbReference type="Pfam" id="PF13499">
    <property type="entry name" value="EF-hand_7"/>
    <property type="match status" value="1"/>
</dbReference>
<dbReference type="PRINTS" id="PR00450">
    <property type="entry name" value="RECOVERIN"/>
</dbReference>
<dbReference type="SMART" id="SM00054">
    <property type="entry name" value="EFh"/>
    <property type="match status" value="3"/>
</dbReference>
<dbReference type="SUPFAM" id="SSF47473">
    <property type="entry name" value="EF-hand"/>
    <property type="match status" value="1"/>
</dbReference>
<dbReference type="PROSITE" id="PS00018">
    <property type="entry name" value="EF_HAND_1"/>
    <property type="match status" value="3"/>
</dbReference>
<dbReference type="PROSITE" id="PS50222">
    <property type="entry name" value="EF_HAND_2"/>
    <property type="match status" value="3"/>
</dbReference>
<proteinExistence type="evidence at protein level"/>
<gene>
    <name type="primary">Frq1</name>
    <name type="synonym">Frq</name>
    <name type="ORF">CG5744</name>
</gene>